<evidence type="ECO:0000255" key="1"/>
<evidence type="ECO:0000269" key="2">
    <source>
    </source>
</evidence>
<evidence type="ECO:0000305" key="3"/>
<gene>
    <name type="primary">COBL2</name>
    <name type="ordered locus">At3g29810</name>
    <name type="ORF">K17E7.7</name>
</gene>
<gene>
    <name type="primary">COBL3</name>
    <name type="ordered locus">At1gXXXXX</name>
    <name type="ORF">F21N10.4</name>
</gene>
<protein>
    <recommendedName>
        <fullName>COBRA-like protein 2</fullName>
    </recommendedName>
</protein>
<accession>Q8L8Q7</accession>
<accession>Q9FWK1</accession>
<accession>Q9LJ49</accession>
<keyword id="KW-1003">Cell membrane</keyword>
<keyword id="KW-0325">Glycoprotein</keyword>
<keyword id="KW-0336">GPI-anchor</keyword>
<keyword id="KW-0449">Lipoprotein</keyword>
<keyword id="KW-0472">Membrane</keyword>
<keyword id="KW-1185">Reference proteome</keyword>
<keyword id="KW-0732">Signal</keyword>
<reference key="1">
    <citation type="journal article" date="2000" name="DNA Res.">
        <title>Structural analysis of Arabidopsis thaliana chromosome 3. II. Sequence features of the 4,251,695 bp regions covered by 90 P1, TAC and BAC clones.</title>
        <authorList>
            <person name="Kaneko T."/>
            <person name="Katoh T."/>
            <person name="Sato S."/>
            <person name="Nakamura Y."/>
            <person name="Asamizu E."/>
            <person name="Tabata S."/>
        </authorList>
    </citation>
    <scope>NUCLEOTIDE SEQUENCE [LARGE SCALE GENOMIC DNA]</scope>
    <source>
        <strain>cv. Columbia</strain>
    </source>
</reference>
<reference key="2">
    <citation type="journal article" date="2000" name="Nature">
        <title>Sequence and analysis of chromosome 1 of the plant Arabidopsis thaliana.</title>
        <authorList>
            <person name="Theologis A."/>
            <person name="Ecker J.R."/>
            <person name="Palm C.J."/>
            <person name="Federspiel N.A."/>
            <person name="Kaul S."/>
            <person name="White O."/>
            <person name="Alonso J."/>
            <person name="Altafi H."/>
            <person name="Araujo R."/>
            <person name="Bowman C.L."/>
            <person name="Brooks S.Y."/>
            <person name="Buehler E."/>
            <person name="Chan A."/>
            <person name="Chao Q."/>
            <person name="Chen H."/>
            <person name="Cheuk R.F."/>
            <person name="Chin C.W."/>
            <person name="Chung M.K."/>
            <person name="Conn L."/>
            <person name="Conway A.B."/>
            <person name="Conway A.R."/>
            <person name="Creasy T.H."/>
            <person name="Dewar K."/>
            <person name="Dunn P."/>
            <person name="Etgu P."/>
            <person name="Feldblyum T.V."/>
            <person name="Feng J.-D."/>
            <person name="Fong B."/>
            <person name="Fujii C.Y."/>
            <person name="Gill J.E."/>
            <person name="Goldsmith A.D."/>
            <person name="Haas B."/>
            <person name="Hansen N.F."/>
            <person name="Hughes B."/>
            <person name="Huizar L."/>
            <person name="Hunter J.L."/>
            <person name="Jenkins J."/>
            <person name="Johnson-Hopson C."/>
            <person name="Khan S."/>
            <person name="Khaykin E."/>
            <person name="Kim C.J."/>
            <person name="Koo H.L."/>
            <person name="Kremenetskaia I."/>
            <person name="Kurtz D.B."/>
            <person name="Kwan A."/>
            <person name="Lam B."/>
            <person name="Langin-Hooper S."/>
            <person name="Lee A."/>
            <person name="Lee J.M."/>
            <person name="Lenz C.A."/>
            <person name="Li J.H."/>
            <person name="Li Y.-P."/>
            <person name="Lin X."/>
            <person name="Liu S.X."/>
            <person name="Liu Z.A."/>
            <person name="Luros J.S."/>
            <person name="Maiti R."/>
            <person name="Marziali A."/>
            <person name="Militscher J."/>
            <person name="Miranda M."/>
            <person name="Nguyen M."/>
            <person name="Nierman W.C."/>
            <person name="Osborne B.I."/>
            <person name="Pai G."/>
            <person name="Peterson J."/>
            <person name="Pham P.K."/>
            <person name="Rizzo M."/>
            <person name="Rooney T."/>
            <person name="Rowley D."/>
            <person name="Sakano H."/>
            <person name="Salzberg S.L."/>
            <person name="Schwartz J.R."/>
            <person name="Shinn P."/>
            <person name="Southwick A.M."/>
            <person name="Sun H."/>
            <person name="Tallon L.J."/>
            <person name="Tambunga G."/>
            <person name="Toriumi M.J."/>
            <person name="Town C.D."/>
            <person name="Utterback T."/>
            <person name="Van Aken S."/>
            <person name="Vaysberg M."/>
            <person name="Vysotskaia V.S."/>
            <person name="Walker M."/>
            <person name="Wu D."/>
            <person name="Yu G."/>
            <person name="Fraser C.M."/>
            <person name="Venter J.C."/>
            <person name="Davis R.W."/>
        </authorList>
    </citation>
    <scope>NUCLEOTIDE SEQUENCE [LARGE SCALE GENOMIC DNA]</scope>
    <source>
        <strain>cv. Columbia</strain>
    </source>
</reference>
<reference key="3">
    <citation type="journal article" date="2017" name="Plant J.">
        <title>Araport11: a complete reannotation of the Arabidopsis thaliana reference genome.</title>
        <authorList>
            <person name="Cheng C.Y."/>
            <person name="Krishnakumar V."/>
            <person name="Chan A.P."/>
            <person name="Thibaud-Nissen F."/>
            <person name="Schobel S."/>
            <person name="Town C.D."/>
        </authorList>
    </citation>
    <scope>GENOME REANNOTATION</scope>
    <source>
        <strain>cv. Columbia</strain>
    </source>
</reference>
<reference key="4">
    <citation type="submission" date="2002-03" db="EMBL/GenBank/DDBJ databases">
        <title>Full-length cDNA from Arabidopsis thaliana.</title>
        <authorList>
            <person name="Brover V.V."/>
            <person name="Troukhan M.E."/>
            <person name="Alexandrov N.A."/>
            <person name="Lu Y.-P."/>
            <person name="Flavell R.B."/>
            <person name="Feldmann K.A."/>
        </authorList>
    </citation>
    <scope>NUCLEOTIDE SEQUENCE [LARGE SCALE MRNA]</scope>
</reference>
<reference key="5">
    <citation type="journal article" date="2002" name="Plant Physiol.">
        <title>The COBRA family of putative GPI-anchored proteins in Arabidopsis. A new fellowship in expansion.</title>
        <authorList>
            <person name="Roudier F."/>
            <person name="Schindelman G."/>
            <person name="DeSalle R."/>
            <person name="Benfey P.N."/>
        </authorList>
    </citation>
    <scope>TISSUE SPECIFICITY</scope>
</reference>
<proteinExistence type="evidence at transcript level"/>
<organism>
    <name type="scientific">Arabidopsis thaliana</name>
    <name type="common">Mouse-ear cress</name>
    <dbReference type="NCBI Taxonomy" id="3702"/>
    <lineage>
        <taxon>Eukaryota</taxon>
        <taxon>Viridiplantae</taxon>
        <taxon>Streptophyta</taxon>
        <taxon>Embryophyta</taxon>
        <taxon>Tracheophyta</taxon>
        <taxon>Spermatophyta</taxon>
        <taxon>Magnoliopsida</taxon>
        <taxon>eudicotyledons</taxon>
        <taxon>Gunneridae</taxon>
        <taxon>Pentapetalae</taxon>
        <taxon>rosids</taxon>
        <taxon>malvids</taxon>
        <taxon>Brassicales</taxon>
        <taxon>Brassicaceae</taxon>
        <taxon>Camelineae</taxon>
        <taxon>Arabidopsis</taxon>
    </lineage>
</organism>
<feature type="signal peptide" evidence="1">
    <location>
        <begin position="1"/>
        <end position="28"/>
    </location>
</feature>
<feature type="chain" id="PRO_0000005574" description="COBRA-like protein 2">
    <location>
        <begin position="29"/>
        <end position="417"/>
    </location>
</feature>
<feature type="propeptide" id="PRO_0000005575" description="Removed in mature form" evidence="1">
    <location>
        <begin position="418"/>
        <end position="441"/>
    </location>
</feature>
<feature type="lipid moiety-binding region" description="GPI-anchor amidated asparagine" evidence="1">
    <location>
        <position position="417"/>
    </location>
</feature>
<feature type="glycosylation site" description="N-linked (GlcNAc...) asparagine" evidence="1">
    <location>
        <position position="37"/>
    </location>
</feature>
<feature type="glycosylation site" description="N-linked (GlcNAc...) asparagine" evidence="1">
    <location>
        <position position="162"/>
    </location>
</feature>
<feature type="glycosylation site" description="N-linked (GlcNAc...) asparagine" evidence="1">
    <location>
        <position position="170"/>
    </location>
</feature>
<feature type="glycosylation site" description="N-linked (GlcNAc...) asparagine" evidence="1">
    <location>
        <position position="209"/>
    </location>
</feature>
<feature type="glycosylation site" description="N-linked (GlcNAc...) asparagine" evidence="1">
    <location>
        <position position="234"/>
    </location>
</feature>
<feature type="glycosylation site" description="N-linked (GlcNAc...) asparagine" evidence="1">
    <location>
        <position position="249"/>
    </location>
</feature>
<feature type="glycosylation site" description="N-linked (GlcNAc...) asparagine" evidence="1">
    <location>
        <position position="314"/>
    </location>
</feature>
<feature type="glycosylation site" description="N-linked (GlcNAc...) asparagine" evidence="1">
    <location>
        <position position="329"/>
    </location>
</feature>
<feature type="glycosylation site" description="N-linked (GlcNAc...) asparagine" evidence="1">
    <location>
        <position position="348"/>
    </location>
</feature>
<feature type="sequence conflict" description="In Ref. 4; AAM67179." evidence="3" ref="4">
    <original>S</original>
    <variation>I</variation>
    <location>
        <position position="20"/>
    </location>
</feature>
<feature type="sequence conflict" description="In Ref. 4; AAM67179." evidence="3" ref="4">
    <original>V</original>
    <variation>F</variation>
    <location>
        <position position="322"/>
    </location>
</feature>
<feature type="sequence conflict" description="In Ref. 4; AAM67179." evidence="3" ref="4">
    <original>K</original>
    <variation>Q</variation>
    <location>
        <position position="332"/>
    </location>
</feature>
<comment type="subcellular location">
    <subcellularLocation>
        <location>Cell membrane</location>
        <topology>Lipid-anchor</topology>
        <topology>GPI-anchor</topology>
    </subcellularLocation>
</comment>
<comment type="tissue specificity">
    <text evidence="2">Expressed in roots, stems, leaves, flowers and siliques.</text>
</comment>
<comment type="similarity">
    <text evidence="3">Belongs to the COBRA family.</text>
</comment>
<comment type="sequence caution" evidence="3">
    <conflict type="erroneous gene model prediction">
        <sequence resource="EMBL-CDS" id="AAG12670"/>
    </conflict>
</comment>
<comment type="sequence caution" evidence="3">
    <conflict type="erroneous gene model prediction">
        <sequence resource="EMBL-CDS" id="BAB02996"/>
    </conflict>
</comment>
<name>COBL2_ARATH</name>
<sequence length="441" mass="49697">MNILFSRFSFLLLFLCSWTSFTFTTTEAYDALDPYGNITIKWDIMSWTGDGYVAVVTIFNFQQYRHIEAPGWQLGWSWMKKEVIWSMVGGQATEQGDCSKFKGNIPHCCKKTPAIVDLLPGTPYNQQISNCCRGGVISAWAQDPATAISSFQISVGQSGTTNTTVRAPRNITLKAPGPGYTCGPAKLVKPSRFISADKRRKTQSLLTWNITCTYSQFLARKTPTCCVSLSAFYNETIVPCPTCSCGCQNSSQAGTCVDPKIASVVPALGKNNLEPLLQCTQHMCPIRVHWHVKTSYKEYWRVKVAITNFNYNMNYSQWNLVVQHPNFDNLTKLFSFNYKPLNPYLNINDTAMLWGIKFYNDFLSQAGPVGNVQSELLFQKNPLEFTFEKGWAFPRRIYFNGDNCVMPPPDSYPWLPNASPNIATSPFVILLITFLSVLILM</sequence>
<dbReference type="EMBL" id="AP000736">
    <property type="protein sequence ID" value="BAB02996.1"/>
    <property type="status" value="ALT_SEQ"/>
    <property type="molecule type" value="Genomic_DNA"/>
</dbReference>
<dbReference type="EMBL" id="AC027033">
    <property type="protein sequence ID" value="AAG12670.1"/>
    <property type="status" value="ALT_SEQ"/>
    <property type="molecule type" value="Genomic_DNA"/>
</dbReference>
<dbReference type="EMBL" id="CP002686">
    <property type="protein sequence ID" value="AEE77616.1"/>
    <property type="molecule type" value="Genomic_DNA"/>
</dbReference>
<dbReference type="EMBL" id="AY088873">
    <property type="protein sequence ID" value="AAM67179.1"/>
    <property type="molecule type" value="mRNA"/>
</dbReference>
<dbReference type="RefSeq" id="NP_566851.1">
    <property type="nucleotide sequence ID" value="NM_113910.5"/>
</dbReference>
<dbReference type="FunCoup" id="Q8L8Q7">
    <property type="interactions" value="18"/>
</dbReference>
<dbReference type="STRING" id="3702.Q8L8Q7"/>
<dbReference type="GlyCosmos" id="Q8L8Q7">
    <property type="glycosylation" value="9 sites, No reported glycans"/>
</dbReference>
<dbReference type="GlyGen" id="Q8L8Q7">
    <property type="glycosylation" value="10 sites"/>
</dbReference>
<dbReference type="PaxDb" id="3702-AT3G29810.1"/>
<dbReference type="ProteomicsDB" id="241054"/>
<dbReference type="EnsemblPlants" id="AT3G29810.1">
    <property type="protein sequence ID" value="AT3G29810.1"/>
    <property type="gene ID" value="AT3G29810"/>
</dbReference>
<dbReference type="GeneID" id="822697"/>
<dbReference type="Gramene" id="AT3G29810.1">
    <property type="protein sequence ID" value="AT3G29810.1"/>
    <property type="gene ID" value="AT3G29810"/>
</dbReference>
<dbReference type="KEGG" id="ath:AT3G29810"/>
<dbReference type="Araport" id="AT3G29810"/>
<dbReference type="TAIR" id="AT3G29810">
    <property type="gene designation" value="COBL2"/>
</dbReference>
<dbReference type="eggNOG" id="ENOG502QTGW">
    <property type="taxonomic scope" value="Eukaryota"/>
</dbReference>
<dbReference type="HOGENOM" id="CLU_038120_0_0_1"/>
<dbReference type="InParanoid" id="Q8L8Q7"/>
<dbReference type="OMA" id="IMAFAFC"/>
<dbReference type="PhylomeDB" id="Q8L8Q7"/>
<dbReference type="PRO" id="PR:Q8L8Q7"/>
<dbReference type="Proteomes" id="UP000006548">
    <property type="component" value="Chromosome 3"/>
</dbReference>
<dbReference type="ExpressionAtlas" id="Q8L8Q7">
    <property type="expression patterns" value="baseline and differential"/>
</dbReference>
<dbReference type="GO" id="GO:0005794">
    <property type="term" value="C:Golgi apparatus"/>
    <property type="evidence" value="ECO:0007005"/>
    <property type="project" value="TAIR"/>
</dbReference>
<dbReference type="GO" id="GO:0005797">
    <property type="term" value="C:Golgi medial cisterna"/>
    <property type="evidence" value="ECO:0007005"/>
    <property type="project" value="TAIR"/>
</dbReference>
<dbReference type="GO" id="GO:0005886">
    <property type="term" value="C:plasma membrane"/>
    <property type="evidence" value="ECO:0007669"/>
    <property type="project" value="UniProtKB-SubCell"/>
</dbReference>
<dbReference type="GO" id="GO:0098552">
    <property type="term" value="C:side of membrane"/>
    <property type="evidence" value="ECO:0007669"/>
    <property type="project" value="UniProtKB-KW"/>
</dbReference>
<dbReference type="GO" id="GO:0010215">
    <property type="term" value="P:cellulose microfibril organization"/>
    <property type="evidence" value="ECO:0000315"/>
    <property type="project" value="TAIR"/>
</dbReference>
<dbReference type="GO" id="GO:0048354">
    <property type="term" value="P:mucilage biosynthetic process involved in seed coat development"/>
    <property type="evidence" value="ECO:0000315"/>
    <property type="project" value="TAIR"/>
</dbReference>
<dbReference type="GO" id="GO:0009832">
    <property type="term" value="P:plant-type cell wall biogenesis"/>
    <property type="evidence" value="ECO:0000315"/>
    <property type="project" value="TAIR"/>
</dbReference>
<dbReference type="GO" id="GO:0052324">
    <property type="term" value="P:plant-type cell wall cellulose biosynthetic process"/>
    <property type="evidence" value="ECO:0000315"/>
    <property type="project" value="TAIR"/>
</dbReference>
<dbReference type="GO" id="GO:0009664">
    <property type="term" value="P:plant-type cell wall organization"/>
    <property type="evidence" value="ECO:0000315"/>
    <property type="project" value="TAIR"/>
</dbReference>
<dbReference type="GO" id="GO:0010214">
    <property type="term" value="P:seed coat development"/>
    <property type="evidence" value="ECO:0000315"/>
    <property type="project" value="TAIR"/>
</dbReference>
<dbReference type="GO" id="GO:0048316">
    <property type="term" value="P:seed development"/>
    <property type="evidence" value="ECO:0000315"/>
    <property type="project" value="TAIR"/>
</dbReference>
<dbReference type="InterPro" id="IPR056900">
    <property type="entry name" value="COB_C"/>
</dbReference>
<dbReference type="InterPro" id="IPR006918">
    <property type="entry name" value="COBRA_pln"/>
</dbReference>
<dbReference type="PANTHER" id="PTHR31673:SF62">
    <property type="entry name" value="COBRA-LIKE PROTEIN 2"/>
    <property type="match status" value="1"/>
</dbReference>
<dbReference type="PANTHER" id="PTHR31673">
    <property type="entry name" value="PROTEIN COBRA"/>
    <property type="match status" value="1"/>
</dbReference>
<dbReference type="Pfam" id="PF25079">
    <property type="entry name" value="COB_C"/>
    <property type="match status" value="1"/>
</dbReference>
<dbReference type="Pfam" id="PF04833">
    <property type="entry name" value="COBRA"/>
    <property type="match status" value="1"/>
</dbReference>
<dbReference type="PIRSF" id="PIRSF038122">
    <property type="entry name" value="COBRA"/>
    <property type="match status" value="1"/>
</dbReference>